<proteinExistence type="evidence at protein level"/>
<name>XERC_BACSU</name>
<protein>
    <recommendedName>
        <fullName evidence="1">Tyrosine recombinase XerC</fullName>
    </recommendedName>
</protein>
<comment type="function">
    <text evidence="1">Site-specific tyrosine recombinase, which acts by catalyzing the cutting and rejoining of the recombining DNA molecules. The XerC-XerD complex is essential to convert dimers of the bacterial chromosome into monomers to permit their segregation at cell division. It also contributes to the segregational stability of plasmids.</text>
</comment>
<comment type="subunit">
    <text evidence="1">Forms a cyclic heterotetrameric complex composed of two molecules of XerC and two molecules of XerD.</text>
</comment>
<comment type="subcellular location">
    <subcellularLocation>
        <location evidence="1">Cytoplasm</location>
    </subcellularLocation>
</comment>
<comment type="similarity">
    <text evidence="1">Belongs to the 'phage' integrase family. XerC subfamily.</text>
</comment>
<sequence>MENVKNFVKLFVEYLQIEKNYSQYTIVNYVDSIEEFETFLRVQGINGFEEAAYQDTRIFLTEAYEKGLSRRTISKKISALRSFYKFLMREKLIEENPFQLVHLPKQEKRIPKFLYQKELEELFEVSDISQPAGMRDQALLELLYATGMRVSECCSITINDVDLFMDTVLVHGKGKKQRYIPFGSYAREALKVYMNSGRQCLLMKAKEPHDLLFVNQRGGPLTARGIRHILSGLVQKASSTLHIHPHMLRHTFATHLLNEGADLRSVQELLGHSNLSSTQIYTHVSKEMLRNTYMSHHPRAFKKN</sequence>
<evidence type="ECO:0000255" key="1">
    <source>
        <dbReference type="HAMAP-Rule" id="MF_01808"/>
    </source>
</evidence>
<evidence type="ECO:0000255" key="2">
    <source>
        <dbReference type="PROSITE-ProRule" id="PRU01246"/>
    </source>
</evidence>
<evidence type="ECO:0000255" key="3">
    <source>
        <dbReference type="PROSITE-ProRule" id="PRU01248"/>
    </source>
</evidence>
<accession>P39776</accession>
<feature type="chain" id="PRO_0000095284" description="Tyrosine recombinase XerC">
    <location>
        <begin position="1"/>
        <end position="304"/>
    </location>
</feature>
<feature type="domain" description="Core-binding (CB)" evidence="3">
    <location>
        <begin position="2"/>
        <end position="88"/>
    </location>
</feature>
<feature type="domain" description="Tyr recombinase" evidence="2">
    <location>
        <begin position="109"/>
        <end position="294"/>
    </location>
</feature>
<feature type="active site" evidence="1">
    <location>
        <position position="149"/>
    </location>
</feature>
<feature type="active site" evidence="1">
    <location>
        <position position="173"/>
    </location>
</feature>
<feature type="active site" evidence="1">
    <location>
        <position position="246"/>
    </location>
</feature>
<feature type="active site" evidence="1">
    <location>
        <position position="249"/>
    </location>
</feature>
<feature type="active site" evidence="1">
    <location>
        <position position="272"/>
    </location>
</feature>
<feature type="active site" description="O-(3'-phospho-DNA)-tyrosine intermediate" evidence="1">
    <location>
        <position position="281"/>
    </location>
</feature>
<organism>
    <name type="scientific">Bacillus subtilis (strain 168)</name>
    <dbReference type="NCBI Taxonomy" id="224308"/>
    <lineage>
        <taxon>Bacteria</taxon>
        <taxon>Bacillati</taxon>
        <taxon>Bacillota</taxon>
        <taxon>Bacilli</taxon>
        <taxon>Bacillales</taxon>
        <taxon>Bacillaceae</taxon>
        <taxon>Bacillus</taxon>
    </lineage>
</organism>
<dbReference type="EMBL" id="U13634">
    <property type="protein sequence ID" value="AAB03369.1"/>
    <property type="molecule type" value="Genomic_DNA"/>
</dbReference>
<dbReference type="EMBL" id="AL009126">
    <property type="protein sequence ID" value="CAB13487.1"/>
    <property type="molecule type" value="Genomic_DNA"/>
</dbReference>
<dbReference type="EMBL" id="AJ000975">
    <property type="protein sequence ID" value="CAA04424.1"/>
    <property type="molecule type" value="Genomic_DNA"/>
</dbReference>
<dbReference type="PIR" id="G69601">
    <property type="entry name" value="G69601"/>
</dbReference>
<dbReference type="RefSeq" id="NP_389496.1">
    <property type="nucleotide sequence ID" value="NC_000964.3"/>
</dbReference>
<dbReference type="RefSeq" id="WP_003231988.1">
    <property type="nucleotide sequence ID" value="NZ_OZ025638.1"/>
</dbReference>
<dbReference type="SMR" id="P39776"/>
<dbReference type="FunCoup" id="P39776">
    <property type="interactions" value="46"/>
</dbReference>
<dbReference type="STRING" id="224308.BSU16140"/>
<dbReference type="PaxDb" id="224308-BSU16140"/>
<dbReference type="EnsemblBacteria" id="CAB13487">
    <property type="protein sequence ID" value="CAB13487"/>
    <property type="gene ID" value="BSU_16140"/>
</dbReference>
<dbReference type="GeneID" id="938003"/>
<dbReference type="KEGG" id="bsu:BSU16140"/>
<dbReference type="PATRIC" id="fig|224308.179.peg.1754"/>
<dbReference type="eggNOG" id="COG4974">
    <property type="taxonomic scope" value="Bacteria"/>
</dbReference>
<dbReference type="InParanoid" id="P39776"/>
<dbReference type="OrthoDB" id="9801717at2"/>
<dbReference type="PhylomeDB" id="P39776"/>
<dbReference type="BioCyc" id="BSUB:BSU16140-MONOMER"/>
<dbReference type="Proteomes" id="UP000001570">
    <property type="component" value="Chromosome"/>
</dbReference>
<dbReference type="GO" id="GO:0005737">
    <property type="term" value="C:cytoplasm"/>
    <property type="evidence" value="ECO:0007669"/>
    <property type="project" value="UniProtKB-SubCell"/>
</dbReference>
<dbReference type="GO" id="GO:0003677">
    <property type="term" value="F:DNA binding"/>
    <property type="evidence" value="ECO:0007669"/>
    <property type="project" value="UniProtKB-KW"/>
</dbReference>
<dbReference type="GO" id="GO:0009009">
    <property type="term" value="F:site-specific recombinase activity"/>
    <property type="evidence" value="ECO:0000318"/>
    <property type="project" value="GO_Central"/>
</dbReference>
<dbReference type="GO" id="GO:0009037">
    <property type="term" value="F:tyrosine-based site-specific recombinase activity"/>
    <property type="evidence" value="ECO:0007669"/>
    <property type="project" value="UniProtKB-UniRule"/>
</dbReference>
<dbReference type="GO" id="GO:0051301">
    <property type="term" value="P:cell division"/>
    <property type="evidence" value="ECO:0007669"/>
    <property type="project" value="UniProtKB-KW"/>
</dbReference>
<dbReference type="GO" id="GO:0007059">
    <property type="term" value="P:chromosome segregation"/>
    <property type="evidence" value="ECO:0000318"/>
    <property type="project" value="GO_Central"/>
</dbReference>
<dbReference type="GO" id="GO:0006310">
    <property type="term" value="P:DNA recombination"/>
    <property type="evidence" value="ECO:0000318"/>
    <property type="project" value="GO_Central"/>
</dbReference>
<dbReference type="GO" id="GO:0006313">
    <property type="term" value="P:DNA transposition"/>
    <property type="evidence" value="ECO:0007669"/>
    <property type="project" value="UniProtKB-UniRule"/>
</dbReference>
<dbReference type="CDD" id="cd00798">
    <property type="entry name" value="INT_XerDC_C"/>
    <property type="match status" value="1"/>
</dbReference>
<dbReference type="Gene3D" id="1.10.150.130">
    <property type="match status" value="1"/>
</dbReference>
<dbReference type="Gene3D" id="1.10.443.10">
    <property type="entry name" value="Intergrase catalytic core"/>
    <property type="match status" value="1"/>
</dbReference>
<dbReference type="HAMAP" id="MF_01808">
    <property type="entry name" value="Recomb_XerC_XerD"/>
    <property type="match status" value="1"/>
</dbReference>
<dbReference type="InterPro" id="IPR044068">
    <property type="entry name" value="CB"/>
</dbReference>
<dbReference type="InterPro" id="IPR011010">
    <property type="entry name" value="DNA_brk_join_enz"/>
</dbReference>
<dbReference type="InterPro" id="IPR013762">
    <property type="entry name" value="Integrase-like_cat_sf"/>
</dbReference>
<dbReference type="InterPro" id="IPR002104">
    <property type="entry name" value="Integrase_catalytic"/>
</dbReference>
<dbReference type="InterPro" id="IPR010998">
    <property type="entry name" value="Integrase_recombinase_N"/>
</dbReference>
<dbReference type="InterPro" id="IPR004107">
    <property type="entry name" value="Integrase_SAM-like_N"/>
</dbReference>
<dbReference type="InterPro" id="IPR011931">
    <property type="entry name" value="Recomb_XerC"/>
</dbReference>
<dbReference type="InterPro" id="IPR023009">
    <property type="entry name" value="Tyrosine_recombinase_XerC/XerD"/>
</dbReference>
<dbReference type="InterPro" id="IPR050090">
    <property type="entry name" value="Tyrosine_recombinase_XerCD"/>
</dbReference>
<dbReference type="NCBIfam" id="NF001399">
    <property type="entry name" value="PRK00283.1"/>
    <property type="match status" value="1"/>
</dbReference>
<dbReference type="NCBIfam" id="NF040815">
    <property type="entry name" value="recomb_XerA_Arch"/>
    <property type="match status" value="1"/>
</dbReference>
<dbReference type="NCBIfam" id="TIGR02224">
    <property type="entry name" value="recomb_XerC"/>
    <property type="match status" value="1"/>
</dbReference>
<dbReference type="PANTHER" id="PTHR30349">
    <property type="entry name" value="PHAGE INTEGRASE-RELATED"/>
    <property type="match status" value="1"/>
</dbReference>
<dbReference type="PANTHER" id="PTHR30349:SF77">
    <property type="entry name" value="TYROSINE RECOMBINASE XERC"/>
    <property type="match status" value="1"/>
</dbReference>
<dbReference type="Pfam" id="PF02899">
    <property type="entry name" value="Phage_int_SAM_1"/>
    <property type="match status" value="1"/>
</dbReference>
<dbReference type="Pfam" id="PF00589">
    <property type="entry name" value="Phage_integrase"/>
    <property type="match status" value="1"/>
</dbReference>
<dbReference type="SUPFAM" id="SSF56349">
    <property type="entry name" value="DNA breaking-rejoining enzymes"/>
    <property type="match status" value="1"/>
</dbReference>
<dbReference type="PROSITE" id="PS51900">
    <property type="entry name" value="CB"/>
    <property type="match status" value="1"/>
</dbReference>
<dbReference type="PROSITE" id="PS51898">
    <property type="entry name" value="TYR_RECOMBINASE"/>
    <property type="match status" value="1"/>
</dbReference>
<reference key="1">
    <citation type="journal article" date="1995" name="Mol. Microbiol.">
        <title>A gene required for nutritional repression of the Bacillus subtilis dipeptide permease operon.</title>
        <authorList>
            <person name="Slack F.J."/>
            <person name="Serror P."/>
            <person name="Joyce E."/>
            <person name="Sonenshein A.L."/>
        </authorList>
    </citation>
    <scope>NUCLEOTIDE SEQUENCE [GENOMIC DNA]</scope>
    <source>
        <strain>168 / JH642</strain>
    </source>
</reference>
<reference key="2">
    <citation type="journal article" date="1997" name="Nature">
        <title>The complete genome sequence of the Gram-positive bacterium Bacillus subtilis.</title>
        <authorList>
            <person name="Kunst F."/>
            <person name="Ogasawara N."/>
            <person name="Moszer I."/>
            <person name="Albertini A.M."/>
            <person name="Alloni G."/>
            <person name="Azevedo V."/>
            <person name="Bertero M.G."/>
            <person name="Bessieres P."/>
            <person name="Bolotin A."/>
            <person name="Borchert S."/>
            <person name="Borriss R."/>
            <person name="Boursier L."/>
            <person name="Brans A."/>
            <person name="Braun M."/>
            <person name="Brignell S.C."/>
            <person name="Bron S."/>
            <person name="Brouillet S."/>
            <person name="Bruschi C.V."/>
            <person name="Caldwell B."/>
            <person name="Capuano V."/>
            <person name="Carter N.M."/>
            <person name="Choi S.-K."/>
            <person name="Codani J.-J."/>
            <person name="Connerton I.F."/>
            <person name="Cummings N.J."/>
            <person name="Daniel R.A."/>
            <person name="Denizot F."/>
            <person name="Devine K.M."/>
            <person name="Duesterhoeft A."/>
            <person name="Ehrlich S.D."/>
            <person name="Emmerson P.T."/>
            <person name="Entian K.-D."/>
            <person name="Errington J."/>
            <person name="Fabret C."/>
            <person name="Ferrari E."/>
            <person name="Foulger D."/>
            <person name="Fritz C."/>
            <person name="Fujita M."/>
            <person name="Fujita Y."/>
            <person name="Fuma S."/>
            <person name="Galizzi A."/>
            <person name="Galleron N."/>
            <person name="Ghim S.-Y."/>
            <person name="Glaser P."/>
            <person name="Goffeau A."/>
            <person name="Golightly E.J."/>
            <person name="Grandi G."/>
            <person name="Guiseppi G."/>
            <person name="Guy B.J."/>
            <person name="Haga K."/>
            <person name="Haiech J."/>
            <person name="Harwood C.R."/>
            <person name="Henaut A."/>
            <person name="Hilbert H."/>
            <person name="Holsappel S."/>
            <person name="Hosono S."/>
            <person name="Hullo M.-F."/>
            <person name="Itaya M."/>
            <person name="Jones L.-M."/>
            <person name="Joris B."/>
            <person name="Karamata D."/>
            <person name="Kasahara Y."/>
            <person name="Klaerr-Blanchard M."/>
            <person name="Klein C."/>
            <person name="Kobayashi Y."/>
            <person name="Koetter P."/>
            <person name="Koningstein G."/>
            <person name="Krogh S."/>
            <person name="Kumano M."/>
            <person name="Kurita K."/>
            <person name="Lapidus A."/>
            <person name="Lardinois S."/>
            <person name="Lauber J."/>
            <person name="Lazarevic V."/>
            <person name="Lee S.-M."/>
            <person name="Levine A."/>
            <person name="Liu H."/>
            <person name="Masuda S."/>
            <person name="Mauel C."/>
            <person name="Medigue C."/>
            <person name="Medina N."/>
            <person name="Mellado R.P."/>
            <person name="Mizuno M."/>
            <person name="Moestl D."/>
            <person name="Nakai S."/>
            <person name="Noback M."/>
            <person name="Noone D."/>
            <person name="O'Reilly M."/>
            <person name="Ogawa K."/>
            <person name="Ogiwara A."/>
            <person name="Oudega B."/>
            <person name="Park S.-H."/>
            <person name="Parro V."/>
            <person name="Pohl T.M."/>
            <person name="Portetelle D."/>
            <person name="Porwollik S."/>
            <person name="Prescott A.M."/>
            <person name="Presecan E."/>
            <person name="Pujic P."/>
            <person name="Purnelle B."/>
            <person name="Rapoport G."/>
            <person name="Rey M."/>
            <person name="Reynolds S."/>
            <person name="Rieger M."/>
            <person name="Rivolta C."/>
            <person name="Rocha E."/>
            <person name="Roche B."/>
            <person name="Rose M."/>
            <person name="Sadaie Y."/>
            <person name="Sato T."/>
            <person name="Scanlan E."/>
            <person name="Schleich S."/>
            <person name="Schroeter R."/>
            <person name="Scoffone F."/>
            <person name="Sekiguchi J."/>
            <person name="Sekowska A."/>
            <person name="Seror S.J."/>
            <person name="Serror P."/>
            <person name="Shin B.-S."/>
            <person name="Soldo B."/>
            <person name="Sorokin A."/>
            <person name="Tacconi E."/>
            <person name="Takagi T."/>
            <person name="Takahashi H."/>
            <person name="Takemaru K."/>
            <person name="Takeuchi M."/>
            <person name="Tamakoshi A."/>
            <person name="Tanaka T."/>
            <person name="Terpstra P."/>
            <person name="Tognoni A."/>
            <person name="Tosato V."/>
            <person name="Uchiyama S."/>
            <person name="Vandenbol M."/>
            <person name="Vannier F."/>
            <person name="Vassarotti A."/>
            <person name="Viari A."/>
            <person name="Wambutt R."/>
            <person name="Wedler E."/>
            <person name="Wedler H."/>
            <person name="Weitzenegger T."/>
            <person name="Winters P."/>
            <person name="Wipat A."/>
            <person name="Yamamoto H."/>
            <person name="Yamane K."/>
            <person name="Yasumoto K."/>
            <person name="Yata K."/>
            <person name="Yoshida K."/>
            <person name="Yoshikawa H.-F."/>
            <person name="Zumstein E."/>
            <person name="Yoshikawa H."/>
            <person name="Danchin A."/>
        </authorList>
    </citation>
    <scope>NUCLEOTIDE SEQUENCE [LARGE SCALE GENOMIC DNA]</scope>
    <source>
        <strain>168</strain>
    </source>
</reference>
<reference key="3">
    <citation type="submission" date="1997-10" db="EMBL/GenBank/DDBJ databases">
        <title>Cloning and sequencing 7.5 Kbp of DNA from Bacillus subtilis upstream of the codV gene.</title>
        <authorList>
            <person name="Foulger D."/>
            <person name="Errington J."/>
        </authorList>
    </citation>
    <scope>NUCLEOTIDE SEQUENCE [GENOMIC DNA] OF 1-85</scope>
    <source>
        <strain>168</strain>
    </source>
</reference>
<reference key="4">
    <citation type="journal article" date="1999" name="J. Bacteriol.">
        <title>The ripX locus of Bacillus subtilis encodes a site-specific recombinase involved in proper chromosome partitioning.</title>
        <authorList>
            <person name="Sciochetti S.A."/>
            <person name="Piggot P.J."/>
            <person name="Sherratt D.J."/>
            <person name="Blakely G."/>
        </authorList>
    </citation>
    <scope>DNA-BINDING ACTIVITY</scope>
</reference>
<keyword id="KW-0131">Cell cycle</keyword>
<keyword id="KW-0132">Cell division</keyword>
<keyword id="KW-0159">Chromosome partition</keyword>
<keyword id="KW-0963">Cytoplasm</keyword>
<keyword id="KW-0229">DNA integration</keyword>
<keyword id="KW-0233">DNA recombination</keyword>
<keyword id="KW-0238">DNA-binding</keyword>
<keyword id="KW-1185">Reference proteome</keyword>
<gene>
    <name evidence="1" type="primary">xerC</name>
    <name type="synonym">codV</name>
    <name type="ordered locus">BSU16140</name>
</gene>